<evidence type="ECO:0000255" key="1">
    <source>
        <dbReference type="HAMAP-Rule" id="MF_01304"/>
    </source>
</evidence>
<dbReference type="EMBL" id="CP000886">
    <property type="protein sequence ID" value="ABX68075.1"/>
    <property type="molecule type" value="Genomic_DNA"/>
</dbReference>
<dbReference type="SMR" id="A9MSW1"/>
<dbReference type="KEGG" id="spq:SPAB_02697"/>
<dbReference type="PATRIC" id="fig|1016998.12.peg.2551"/>
<dbReference type="HOGENOM" id="CLU_018816_6_3_6"/>
<dbReference type="BioCyc" id="SENT1016998:SPAB_RS10950-MONOMER"/>
<dbReference type="Proteomes" id="UP000008556">
    <property type="component" value="Chromosome"/>
</dbReference>
<dbReference type="GO" id="GO:0042597">
    <property type="term" value="C:periplasmic space"/>
    <property type="evidence" value="ECO:0007669"/>
    <property type="project" value="UniProtKB-SubCell"/>
</dbReference>
<dbReference type="FunFam" id="1.10.287.470:FF:000004">
    <property type="entry name" value="UPF0194 membrane protein YbhG"/>
    <property type="match status" value="1"/>
</dbReference>
<dbReference type="FunFam" id="2.40.50.100:FF:000025">
    <property type="entry name" value="UPF0194 membrane protein YbhG"/>
    <property type="match status" value="1"/>
</dbReference>
<dbReference type="Gene3D" id="2.40.30.170">
    <property type="match status" value="1"/>
</dbReference>
<dbReference type="Gene3D" id="2.40.50.100">
    <property type="match status" value="2"/>
</dbReference>
<dbReference type="Gene3D" id="1.10.287.470">
    <property type="entry name" value="Helix hairpin bin"/>
    <property type="match status" value="2"/>
</dbReference>
<dbReference type="HAMAP" id="MF_01304">
    <property type="entry name" value="UPF0194"/>
    <property type="match status" value="1"/>
</dbReference>
<dbReference type="InterPro" id="IPR032317">
    <property type="entry name" value="CusB_D23"/>
</dbReference>
<dbReference type="InterPro" id="IPR022936">
    <property type="entry name" value="UPF0194_membrane_YbhG"/>
</dbReference>
<dbReference type="InterPro" id="IPR050465">
    <property type="entry name" value="UPF0194_transport"/>
</dbReference>
<dbReference type="NCBIfam" id="NF002939">
    <property type="entry name" value="PRK03598.1"/>
    <property type="match status" value="1"/>
</dbReference>
<dbReference type="PANTHER" id="PTHR32347">
    <property type="entry name" value="EFFLUX SYSTEM COMPONENT YKNX-RELATED"/>
    <property type="match status" value="1"/>
</dbReference>
<dbReference type="PANTHER" id="PTHR32347:SF29">
    <property type="entry name" value="UPF0194 MEMBRANE PROTEIN YBHG"/>
    <property type="match status" value="1"/>
</dbReference>
<dbReference type="Pfam" id="PF16576">
    <property type="entry name" value="HlyD_D23"/>
    <property type="match status" value="1"/>
</dbReference>
<dbReference type="SUPFAM" id="SSF111369">
    <property type="entry name" value="HlyD-like secretion proteins"/>
    <property type="match status" value="3"/>
</dbReference>
<keyword id="KW-0175">Coiled coil</keyword>
<keyword id="KW-0574">Periplasm</keyword>
<keyword id="KW-0732">Signal</keyword>
<gene>
    <name evidence="1" type="primary">ybhG</name>
    <name type="ordered locus">SPAB_02697</name>
</gene>
<proteinExistence type="inferred from homology"/>
<organism>
    <name type="scientific">Salmonella paratyphi B (strain ATCC BAA-1250 / SPB7)</name>
    <dbReference type="NCBI Taxonomy" id="1016998"/>
    <lineage>
        <taxon>Bacteria</taxon>
        <taxon>Pseudomonadati</taxon>
        <taxon>Pseudomonadota</taxon>
        <taxon>Gammaproteobacteria</taxon>
        <taxon>Enterobacterales</taxon>
        <taxon>Enterobacteriaceae</taxon>
        <taxon>Salmonella</taxon>
    </lineage>
</organism>
<feature type="signal peptide" evidence="1">
    <location>
        <begin position="1"/>
        <end position="19"/>
    </location>
</feature>
<feature type="chain" id="PRO_1000085956" description="UPF0194 membrane protein YbhG">
    <location>
        <begin position="20"/>
        <end position="331"/>
    </location>
</feature>
<feature type="coiled-coil region" evidence="1">
    <location>
        <begin position="107"/>
        <end position="208"/>
    </location>
</feature>
<protein>
    <recommendedName>
        <fullName evidence="1">UPF0194 membrane protein YbhG</fullName>
    </recommendedName>
</protein>
<comment type="subcellular location">
    <subcellularLocation>
        <location evidence="1">Periplasm</location>
    </subcellularLocation>
</comment>
<comment type="similarity">
    <text evidence="1">Belongs to the UPF0194 family.</text>
</comment>
<accession>A9MSW1</accession>
<sequence length="331" mass="36281">MKKPVVIGLAIAAIVAVIAGGTWWYQSRQDDGLTLYGNVDIRTVNISFRVGGRLASLNVDEGDAIKAGQVLGELDHAPYENALMQAKAGVSVAQAQYDLMLAGYRDEEIAQAAAAVRQAQAAYDYAQNFYNRQQGLWKSRTISANDLENARSSRDQAQATLKSAQDKLSQYRTGNREQDIAQAKASLEQAKAQLAQAQLDLQDTTLIAPANGTLLTRAVEPGSMLNAGSTVLTLSLTRPVWVRAYVDERNLSQTQPGRDILLYTDGRPDKPYHGKIGFVSPTAEFTPKTVETPDLRTDLVYRLRIIVTDADDALRQGMPVTVKFNDEARHE</sequence>
<name>YBHG_SALPB</name>
<reference key="1">
    <citation type="submission" date="2007-11" db="EMBL/GenBank/DDBJ databases">
        <authorList>
            <consortium name="The Salmonella enterica serovar Paratyphi B Genome Sequencing Project"/>
            <person name="McClelland M."/>
            <person name="Sanderson E.K."/>
            <person name="Porwollik S."/>
            <person name="Spieth J."/>
            <person name="Clifton W.S."/>
            <person name="Fulton R."/>
            <person name="Cordes M."/>
            <person name="Wollam A."/>
            <person name="Shah N."/>
            <person name="Pepin K."/>
            <person name="Bhonagiri V."/>
            <person name="Nash W."/>
            <person name="Johnson M."/>
            <person name="Thiruvilangam P."/>
            <person name="Wilson R."/>
        </authorList>
    </citation>
    <scope>NUCLEOTIDE SEQUENCE [LARGE SCALE GENOMIC DNA]</scope>
    <source>
        <strain>ATCC BAA-1250 / SPB7</strain>
    </source>
</reference>